<name>RCEM_BLAVI</name>
<protein>
    <recommendedName>
        <fullName>Reaction center protein M chain</fullName>
    </recommendedName>
    <alternativeName>
        <fullName>Photosynthetic reaction center M subunit</fullName>
    </alternativeName>
</protein>
<keyword id="KW-0002">3D-structure</keyword>
<keyword id="KW-0076">Bacteriochlorophyll</keyword>
<keyword id="KW-0148">Chlorophyll</keyword>
<keyword id="KW-0157">Chromophore</keyword>
<keyword id="KW-0249">Electron transport</keyword>
<keyword id="KW-0408">Iron</keyword>
<keyword id="KW-0460">Magnesium</keyword>
<keyword id="KW-0472">Membrane</keyword>
<keyword id="KW-0479">Metal-binding</keyword>
<keyword id="KW-0602">Photosynthesis</keyword>
<keyword id="KW-0674">Reaction center</keyword>
<keyword id="KW-0812">Transmembrane</keyword>
<keyword id="KW-1133">Transmembrane helix</keyword>
<keyword id="KW-0813">Transport</keyword>
<dbReference type="EMBL" id="X03915">
    <property type="protein sequence ID" value="CAA27551.1"/>
    <property type="molecule type" value="Genomic_DNA"/>
</dbReference>
<dbReference type="PIR" id="B25102">
    <property type="entry name" value="B25102"/>
</dbReference>
<dbReference type="RefSeq" id="WP_055036367.1">
    <property type="nucleotide sequence ID" value="NZ_AP014854.2"/>
</dbReference>
<dbReference type="PDB" id="1DXR">
    <property type="method" value="X-ray"/>
    <property type="resolution" value="2.00 A"/>
    <property type="chains" value="M=2-324"/>
</dbReference>
<dbReference type="PDB" id="1PRC">
    <property type="method" value="X-ray"/>
    <property type="resolution" value="2.30 A"/>
    <property type="chains" value="M=2-324"/>
</dbReference>
<dbReference type="PDB" id="1R2C">
    <property type="method" value="X-ray"/>
    <property type="resolution" value="2.86 A"/>
    <property type="chains" value="M=2-324"/>
</dbReference>
<dbReference type="PDB" id="1VRN">
    <property type="method" value="X-ray"/>
    <property type="resolution" value="2.20 A"/>
    <property type="chains" value="M=2-324"/>
</dbReference>
<dbReference type="PDB" id="2I5N">
    <property type="method" value="X-ray"/>
    <property type="resolution" value="1.96 A"/>
    <property type="chains" value="M=2-324"/>
</dbReference>
<dbReference type="PDB" id="2JBL">
    <property type="method" value="X-ray"/>
    <property type="resolution" value="2.40 A"/>
    <property type="chains" value="M=2-324"/>
</dbReference>
<dbReference type="PDB" id="2PRC">
    <property type="method" value="X-ray"/>
    <property type="resolution" value="2.45 A"/>
    <property type="chains" value="M=2-324"/>
</dbReference>
<dbReference type="PDB" id="2WJM">
    <property type="method" value="X-ray"/>
    <property type="resolution" value="1.95 A"/>
    <property type="chains" value="M=1-324"/>
</dbReference>
<dbReference type="PDB" id="2WJN">
    <property type="method" value="X-ray"/>
    <property type="resolution" value="1.86 A"/>
    <property type="chains" value="M=1-324"/>
</dbReference>
<dbReference type="PDB" id="2X5U">
    <property type="method" value="X-ray"/>
    <property type="resolution" value="3.00 A"/>
    <property type="chains" value="M=1-324"/>
</dbReference>
<dbReference type="PDB" id="2X5V">
    <property type="method" value="X-ray"/>
    <property type="resolution" value="3.00 A"/>
    <property type="chains" value="M=1-324"/>
</dbReference>
<dbReference type="PDB" id="3D38">
    <property type="method" value="X-ray"/>
    <property type="resolution" value="3.21 A"/>
    <property type="chains" value="M=2-324"/>
</dbReference>
<dbReference type="PDB" id="3G7F">
    <property type="method" value="X-ray"/>
    <property type="resolution" value="2.50 A"/>
    <property type="chains" value="M=2-324"/>
</dbReference>
<dbReference type="PDB" id="3PRC">
    <property type="method" value="X-ray"/>
    <property type="resolution" value="2.40 A"/>
    <property type="chains" value="M=2-324"/>
</dbReference>
<dbReference type="PDB" id="3T6D">
    <property type="method" value="X-ray"/>
    <property type="resolution" value="1.95 A"/>
    <property type="chains" value="M=2-324"/>
</dbReference>
<dbReference type="PDB" id="3T6E">
    <property type="method" value="X-ray"/>
    <property type="resolution" value="1.92 A"/>
    <property type="chains" value="M=2-324"/>
</dbReference>
<dbReference type="PDB" id="4AC5">
    <property type="method" value="X-ray"/>
    <property type="resolution" value="8.20 A"/>
    <property type="chains" value="M=1-324"/>
</dbReference>
<dbReference type="PDB" id="4CAS">
    <property type="method" value="X-ray"/>
    <property type="resolution" value="3.50 A"/>
    <property type="chains" value="C=1-324"/>
</dbReference>
<dbReference type="PDB" id="5M7J">
    <property type="method" value="X-ray"/>
    <property type="resolution" value="3.50 A"/>
    <property type="chains" value="C=1-324"/>
</dbReference>
<dbReference type="PDB" id="5M7K">
    <property type="method" value="X-ray"/>
    <property type="resolution" value="3.50 A"/>
    <property type="chains" value="C=1-324"/>
</dbReference>
<dbReference type="PDB" id="5M7L">
    <property type="method" value="X-ray"/>
    <property type="resolution" value="3.60 A"/>
    <property type="chains" value="C=1-324"/>
</dbReference>
<dbReference type="PDB" id="5NJ4">
    <property type="method" value="X-ray"/>
    <property type="resolution" value="2.40 A"/>
    <property type="chains" value="M=2-324"/>
</dbReference>
<dbReference type="PDB" id="5O4C">
    <property type="method" value="X-ray"/>
    <property type="resolution" value="2.80 A"/>
    <property type="chains" value="M=2-324"/>
</dbReference>
<dbReference type="PDB" id="5O64">
    <property type="method" value="X-ray"/>
    <property type="resolution" value="3.30 A"/>
    <property type="chains" value="M=2-324"/>
</dbReference>
<dbReference type="PDB" id="5PRC">
    <property type="method" value="X-ray"/>
    <property type="resolution" value="2.35 A"/>
    <property type="chains" value="M=2-324"/>
</dbReference>
<dbReference type="PDB" id="6ET5">
    <property type="method" value="EM"/>
    <property type="resolution" value="3.00 A"/>
    <property type="chains" value="M=2-324"/>
</dbReference>
<dbReference type="PDB" id="6PRC">
    <property type="method" value="X-ray"/>
    <property type="resolution" value="2.30 A"/>
    <property type="chains" value="M=2-324"/>
</dbReference>
<dbReference type="PDB" id="6ZHW">
    <property type="method" value="X-ray"/>
    <property type="resolution" value="2.80 A"/>
    <property type="chains" value="M=2-324"/>
</dbReference>
<dbReference type="PDB" id="6ZI4">
    <property type="method" value="X-ray"/>
    <property type="resolution" value="2.80 A"/>
    <property type="chains" value="M=2-324"/>
</dbReference>
<dbReference type="PDB" id="6ZI5">
    <property type="method" value="X-ray"/>
    <property type="resolution" value="2.80 A"/>
    <property type="chains" value="M=2-324"/>
</dbReference>
<dbReference type="PDB" id="6ZI6">
    <property type="method" value="X-ray"/>
    <property type="resolution" value="2.80 A"/>
    <property type="chains" value="M=2-324"/>
</dbReference>
<dbReference type="PDB" id="6ZI9">
    <property type="method" value="X-ray"/>
    <property type="resolution" value="2.80 A"/>
    <property type="chains" value="M=2-324"/>
</dbReference>
<dbReference type="PDB" id="6ZIA">
    <property type="method" value="X-ray"/>
    <property type="resolution" value="2.80 A"/>
    <property type="chains" value="M=2-324"/>
</dbReference>
<dbReference type="PDB" id="6ZID">
    <property type="method" value="X-ray"/>
    <property type="resolution" value="2.80 A"/>
    <property type="chains" value="M=2-324"/>
</dbReference>
<dbReference type="PDB" id="7PRC">
    <property type="method" value="X-ray"/>
    <property type="resolution" value="2.65 A"/>
    <property type="chains" value="M=2-324"/>
</dbReference>
<dbReference type="PDB" id="7Q7P">
    <property type="method" value="X-ray"/>
    <property type="resolution" value="2.40 A"/>
    <property type="chains" value="MMM=2-324"/>
</dbReference>
<dbReference type="PDB" id="7Q7Q">
    <property type="method" value="X-ray"/>
    <property type="resolution" value="2.25 A"/>
    <property type="chains" value="MMM=2-324"/>
</dbReference>
<dbReference type="PDBsum" id="1DXR"/>
<dbReference type="PDBsum" id="1PRC"/>
<dbReference type="PDBsum" id="1R2C"/>
<dbReference type="PDBsum" id="1VRN"/>
<dbReference type="PDBsum" id="2I5N"/>
<dbReference type="PDBsum" id="2JBL"/>
<dbReference type="PDBsum" id="2PRC"/>
<dbReference type="PDBsum" id="2WJM"/>
<dbReference type="PDBsum" id="2WJN"/>
<dbReference type="PDBsum" id="2X5U"/>
<dbReference type="PDBsum" id="2X5V"/>
<dbReference type="PDBsum" id="3D38"/>
<dbReference type="PDBsum" id="3G7F"/>
<dbReference type="PDBsum" id="3PRC"/>
<dbReference type="PDBsum" id="3T6D"/>
<dbReference type="PDBsum" id="3T6E"/>
<dbReference type="PDBsum" id="4AC5"/>
<dbReference type="PDBsum" id="4CAS"/>
<dbReference type="PDBsum" id="5M7J"/>
<dbReference type="PDBsum" id="5M7K"/>
<dbReference type="PDBsum" id="5M7L"/>
<dbReference type="PDBsum" id="5NJ4"/>
<dbReference type="PDBsum" id="5O4C"/>
<dbReference type="PDBsum" id="5O64"/>
<dbReference type="PDBsum" id="5PRC"/>
<dbReference type="PDBsum" id="6ET5"/>
<dbReference type="PDBsum" id="6PRC"/>
<dbReference type="PDBsum" id="6ZHW"/>
<dbReference type="PDBsum" id="6ZI4"/>
<dbReference type="PDBsum" id="6ZI5"/>
<dbReference type="PDBsum" id="6ZI6"/>
<dbReference type="PDBsum" id="6ZI9"/>
<dbReference type="PDBsum" id="6ZIA"/>
<dbReference type="PDBsum" id="6ZID"/>
<dbReference type="PDBsum" id="7PRC"/>
<dbReference type="PDBsum" id="7Q7P"/>
<dbReference type="PDBsum" id="7Q7Q"/>
<dbReference type="EMDB" id="EMD-3951"/>
<dbReference type="SMR" id="P06010"/>
<dbReference type="IntAct" id="P06010">
    <property type="interactions" value="1"/>
</dbReference>
<dbReference type="STRING" id="1079.BVIR_605"/>
<dbReference type="DrugBank" id="DB07552">
    <property type="generic name" value="(2R)-2-{[4-chloro-6-(ethylamino)-1,3,5-triazin-2-yl]amino}-2-methylbutanenitrile"/>
</dbReference>
<dbReference type="DrugBank" id="DB07551">
    <property type="generic name" value="(2S)-2-{[4-chloro-6-(ethylamino)-1,3,5-triazin-2-yl]amino}-2-methylbutanenitrile"/>
</dbReference>
<dbReference type="DrugBank" id="DB07392">
    <property type="generic name" value="Atrazine"/>
</dbReference>
<dbReference type="DrugBank" id="DB04147">
    <property type="generic name" value="Dodecyldimethylamine N-oxide"/>
</dbReference>
<dbReference type="DrugBank" id="DB04464">
    <property type="generic name" value="N-Formylmethionine"/>
</dbReference>
<dbReference type="DrugBank" id="DB08215">
    <property type="generic name" value="Terbutryn"/>
</dbReference>
<dbReference type="DrugBank" id="DB08689">
    <property type="generic name" value="Ubiquinone Q1"/>
</dbReference>
<dbReference type="DrugBank" id="DB08690">
    <property type="generic name" value="Ubiquinone Q2"/>
</dbReference>
<dbReference type="OrthoDB" id="8555181at2"/>
<dbReference type="EvolutionaryTrace" id="P06010"/>
<dbReference type="GO" id="GO:0030077">
    <property type="term" value="C:plasma membrane light-harvesting complex"/>
    <property type="evidence" value="ECO:0007669"/>
    <property type="project" value="InterPro"/>
</dbReference>
<dbReference type="GO" id="GO:0042717">
    <property type="term" value="C:plasma membrane-derived chromatophore membrane"/>
    <property type="evidence" value="ECO:0007669"/>
    <property type="project" value="UniProtKB-SubCell"/>
</dbReference>
<dbReference type="GO" id="GO:0042314">
    <property type="term" value="F:bacteriochlorophyll binding"/>
    <property type="evidence" value="ECO:0007669"/>
    <property type="project" value="UniProtKB-KW"/>
</dbReference>
<dbReference type="GO" id="GO:0045156">
    <property type="term" value="F:electron transporter, transferring electrons within the cyclic electron transport pathway of photosynthesis activity"/>
    <property type="evidence" value="ECO:0007669"/>
    <property type="project" value="InterPro"/>
</dbReference>
<dbReference type="GO" id="GO:0046872">
    <property type="term" value="F:metal ion binding"/>
    <property type="evidence" value="ECO:0007669"/>
    <property type="project" value="UniProtKB-KW"/>
</dbReference>
<dbReference type="GO" id="GO:0009772">
    <property type="term" value="P:photosynthetic electron transport in photosystem II"/>
    <property type="evidence" value="ECO:0007669"/>
    <property type="project" value="InterPro"/>
</dbReference>
<dbReference type="CDD" id="cd09291">
    <property type="entry name" value="Photo-RC_M"/>
    <property type="match status" value="1"/>
</dbReference>
<dbReference type="Gene3D" id="1.20.85.10">
    <property type="entry name" value="Photosystem II protein D1-like"/>
    <property type="match status" value="2"/>
</dbReference>
<dbReference type="InterPro" id="IPR036854">
    <property type="entry name" value="Photo_II_D1/D2_sf"/>
</dbReference>
<dbReference type="InterPro" id="IPR000484">
    <property type="entry name" value="Photo_RC_L/M"/>
</dbReference>
<dbReference type="InterPro" id="IPR055265">
    <property type="entry name" value="Photo_RC_L/M_CS"/>
</dbReference>
<dbReference type="InterPro" id="IPR005781">
    <property type="entry name" value="Photo_RC_M"/>
</dbReference>
<dbReference type="NCBIfam" id="TIGR01115">
    <property type="entry name" value="pufM"/>
    <property type="match status" value="1"/>
</dbReference>
<dbReference type="Pfam" id="PF00124">
    <property type="entry name" value="Photo_RC"/>
    <property type="match status" value="1"/>
</dbReference>
<dbReference type="PRINTS" id="PR00256">
    <property type="entry name" value="REACTNCENTRE"/>
</dbReference>
<dbReference type="SUPFAM" id="SSF81483">
    <property type="entry name" value="Bacterial photosystem II reaction centre, L and M subunits"/>
    <property type="match status" value="1"/>
</dbReference>
<dbReference type="PROSITE" id="PS00244">
    <property type="entry name" value="REACTION_CENTER"/>
    <property type="match status" value="1"/>
</dbReference>
<sequence>MADYQTIYTQIQARGPHITVSGEWGDNDRVGKPFYSYWLGKIGDAQIGPIYLGASGIAAFAFGSTAILIILFNMAAEVHFDPLQFFRQFFWLGLYPPKAQYGMGIPPLHDGGWWLMAGLFMTLSLGSWWIRVYSRARALGLGTHIAWNFAAAIFFVLCIGCIHPTLVGSWSEGVPFGIWPHIDWLTAFSIRYGNFYYCPWHGFSIGFAYGCGLLFAAHGATILAVARFGGDREIEQITDRGTAVERAALFWRWTIGFNATIESVHRWGWFFSLMVMVSASVGILLTGTFVDNWYLWCVKHGAAPDYPAYLPATPDPASLPGAPK</sequence>
<evidence type="ECO:0000250" key="1"/>
<evidence type="ECO:0000269" key="2">
    <source>
    </source>
</evidence>
<evidence type="ECO:0000305" key="3"/>
<evidence type="ECO:0007829" key="4">
    <source>
        <dbReference type="PDB" id="2WJN"/>
    </source>
</evidence>
<evidence type="ECO:0007829" key="5">
    <source>
        <dbReference type="PDB" id="3D38"/>
    </source>
</evidence>
<evidence type="ECO:0007829" key="6">
    <source>
        <dbReference type="PDB" id="3T6E"/>
    </source>
</evidence>
<feature type="initiator methionine" description="Removed">
    <location>
        <position position="1"/>
    </location>
</feature>
<feature type="chain" id="PRO_0000090420" description="Reaction center protein M chain">
    <location>
        <begin position="2"/>
        <end position="324"/>
    </location>
</feature>
<feature type="topological domain" description="Cytoplasmic" evidence="2">
    <location>
        <begin position="2"/>
        <end position="51"/>
    </location>
</feature>
<feature type="transmembrane region" description="Helical">
    <location>
        <begin position="52"/>
        <end position="76"/>
    </location>
</feature>
<feature type="topological domain" description="Periplasmic" evidence="2">
    <location>
        <begin position="77"/>
        <end position="110"/>
    </location>
</feature>
<feature type="transmembrane region" description="Helical">
    <location>
        <begin position="111"/>
        <end position="137"/>
    </location>
</feature>
<feature type="topological domain" description="Cytoplasmic" evidence="2">
    <location>
        <begin position="138"/>
        <end position="142"/>
    </location>
</feature>
<feature type="transmembrane region" description="Helical">
    <location>
        <begin position="143"/>
        <end position="166"/>
    </location>
</feature>
<feature type="topological domain" description="Periplasmic" evidence="2">
    <location>
        <begin position="167"/>
        <end position="197"/>
    </location>
</feature>
<feature type="transmembrane region" description="Helical">
    <location>
        <begin position="198"/>
        <end position="223"/>
    </location>
</feature>
<feature type="topological domain" description="Cytoplasmic" evidence="2">
    <location>
        <begin position="224"/>
        <end position="259"/>
    </location>
</feature>
<feature type="transmembrane region" description="Helical">
    <location>
        <begin position="260"/>
        <end position="284"/>
    </location>
</feature>
<feature type="topological domain" description="Periplasmic" evidence="2">
    <location>
        <begin position="285"/>
        <end position="324"/>
    </location>
</feature>
<feature type="binding site" description="axial binding residue">
    <location>
        <position position="181"/>
    </location>
    <ligand>
        <name>(7R,8Z)-bacteriochlorophyll b</name>
        <dbReference type="ChEBI" id="CHEBI:30034"/>
    </ligand>
    <ligandPart>
        <name>Mg</name>
        <dbReference type="ChEBI" id="CHEBI:25107"/>
    </ligandPart>
</feature>
<feature type="binding site" description="axial binding residue">
    <location>
        <position position="201"/>
    </location>
    <ligand>
        <name>(7R,8Z)-bacteriochlorophyll b</name>
        <dbReference type="ChEBI" id="CHEBI:30034"/>
    </ligand>
    <ligandPart>
        <name>Mg</name>
        <dbReference type="ChEBI" id="CHEBI:25107"/>
    </ligandPart>
</feature>
<feature type="binding site">
    <location>
        <position position="218"/>
    </location>
    <ligand>
        <name>Fe cation</name>
        <dbReference type="ChEBI" id="CHEBI:24875"/>
    </ligand>
</feature>
<feature type="binding site">
    <location>
        <position position="233"/>
    </location>
    <ligand>
        <name>Fe cation</name>
        <dbReference type="ChEBI" id="CHEBI:24875"/>
    </ligand>
</feature>
<feature type="binding site">
    <location>
        <position position="251"/>
    </location>
    <ligand>
        <name>a ubiquinone</name>
        <dbReference type="ChEBI" id="CHEBI:16389"/>
    </ligand>
</feature>
<feature type="binding site">
    <location>
        <position position="265"/>
    </location>
    <ligand>
        <name>Fe cation</name>
        <dbReference type="ChEBI" id="CHEBI:24875"/>
    </ligand>
</feature>
<feature type="helix" evidence="4">
    <location>
        <begin position="4"/>
        <end position="6"/>
    </location>
</feature>
<feature type="strand" evidence="4">
    <location>
        <begin position="10"/>
        <end position="14"/>
    </location>
</feature>
<feature type="helix" evidence="4">
    <location>
        <begin position="26"/>
        <end position="28"/>
    </location>
</feature>
<feature type="strand" evidence="6">
    <location>
        <begin position="29"/>
        <end position="31"/>
    </location>
</feature>
<feature type="helix" evidence="4">
    <location>
        <begin position="39"/>
        <end position="41"/>
    </location>
</feature>
<feature type="strand" evidence="6">
    <location>
        <begin position="45"/>
        <end position="47"/>
    </location>
</feature>
<feature type="helix" evidence="4">
    <location>
        <begin position="54"/>
        <end position="77"/>
    </location>
</feature>
<feature type="turn" evidence="4">
    <location>
        <begin position="78"/>
        <end position="80"/>
    </location>
</feature>
<feature type="helix" evidence="4">
    <location>
        <begin position="82"/>
        <end position="88"/>
    </location>
</feature>
<feature type="helix" evidence="4">
    <location>
        <begin position="89"/>
        <end position="91"/>
    </location>
</feature>
<feature type="helix" evidence="4">
    <location>
        <begin position="108"/>
        <end position="110"/>
    </location>
</feature>
<feature type="helix" evidence="4">
    <location>
        <begin position="112"/>
        <end position="138"/>
    </location>
</feature>
<feature type="helix" evidence="4">
    <location>
        <begin position="144"/>
        <end position="160"/>
    </location>
</feature>
<feature type="helix" evidence="4">
    <location>
        <begin position="162"/>
        <end position="167"/>
    </location>
</feature>
<feature type="helix" evidence="4">
    <location>
        <begin position="170"/>
        <end position="172"/>
    </location>
</feature>
<feature type="helix" evidence="4">
    <location>
        <begin position="178"/>
        <end position="191"/>
    </location>
</feature>
<feature type="helix" evidence="4">
    <location>
        <begin position="195"/>
        <end position="197"/>
    </location>
</feature>
<feature type="helix" evidence="4">
    <location>
        <begin position="199"/>
        <end position="224"/>
    </location>
</feature>
<feature type="helix" evidence="4">
    <location>
        <begin position="226"/>
        <end position="228"/>
    </location>
</feature>
<feature type="turn" evidence="4">
    <location>
        <begin position="229"/>
        <end position="231"/>
    </location>
</feature>
<feature type="helix" evidence="4">
    <location>
        <begin position="233"/>
        <end position="238"/>
    </location>
</feature>
<feature type="helix" evidence="4">
    <location>
        <begin position="242"/>
        <end position="255"/>
    </location>
</feature>
<feature type="helix" evidence="4">
    <location>
        <begin position="263"/>
        <end position="285"/>
    </location>
</feature>
<feature type="turn" evidence="4">
    <location>
        <begin position="287"/>
        <end position="289"/>
    </location>
</feature>
<feature type="helix" evidence="4">
    <location>
        <begin position="293"/>
        <end position="299"/>
    </location>
</feature>
<feature type="helix" evidence="4">
    <location>
        <begin position="316"/>
        <end position="318"/>
    </location>
</feature>
<feature type="strand" evidence="5">
    <location>
        <begin position="319"/>
        <end position="321"/>
    </location>
</feature>
<proteinExistence type="evidence at protein level"/>
<comment type="function">
    <text>The reaction center is a membrane-bound complex that mediates the initial photochemical event in the electron transfer process of photosynthesis.</text>
</comment>
<comment type="subunit">
    <text>Reaction center is composed of four bacteriochlorophylls, two bacteriopheophytins, two ubiquinones, one iron, and three highly hydrophobic polypeptide chains (designated L, M, and H).</text>
</comment>
<comment type="subcellular location">
    <subcellularLocation>
        <location evidence="1">Cellular chromatophore membrane</location>
        <topology evidence="1">Multi-pass membrane protein</topology>
    </subcellularLocation>
</comment>
<comment type="similarity">
    <text evidence="3">Belongs to the reaction center PufL/M/PsbA/D family.</text>
</comment>
<organism>
    <name type="scientific">Blastochloris viridis</name>
    <name type="common">Rhodopseudomonas viridis</name>
    <dbReference type="NCBI Taxonomy" id="1079"/>
    <lineage>
        <taxon>Bacteria</taxon>
        <taxon>Pseudomonadati</taxon>
        <taxon>Pseudomonadota</taxon>
        <taxon>Alphaproteobacteria</taxon>
        <taxon>Hyphomicrobiales</taxon>
        <taxon>Blastochloridaceae</taxon>
        <taxon>Blastochloris</taxon>
    </lineage>
</organism>
<reference key="1">
    <citation type="journal article" date="1986" name="EMBO J.">
        <title>The 'light' and 'medium' subunits of the photosynthetic reaction centre from Rhodopseudomonas viridis: isolation of the genes, nucleotide and amino acid sequence.</title>
        <authorList>
            <person name="Michel H."/>
            <person name="Weyer K.A."/>
            <person name="Gruenberg H."/>
            <person name="Dunger I."/>
            <person name="Oesterhelt D."/>
            <person name="Lottspeich F."/>
        </authorList>
    </citation>
    <scope>NUCLEOTIDE SEQUENCE [GENOMIC DNA]</scope>
    <source>
        <strain>ATCC 19567 / DSM 133 / F</strain>
    </source>
</reference>
<reference key="2">
    <citation type="journal article" date="1985" name="Nature">
        <title>Structure of the protein subunits in the photosynthetic reaction centre of Rhodopseudomonas viridis at 3-A resolution.</title>
        <authorList>
            <person name="Deisenhofer J."/>
            <person name="Epp O."/>
            <person name="Miki K."/>
            <person name="Huber R."/>
            <person name="Michel H."/>
        </authorList>
    </citation>
    <scope>X-RAY CRYSTALLOGRAPHY (3 ANGSTROMS)</scope>
</reference>
<reference key="3">
    <citation type="journal article" date="1984" name="J. Mol. Biol.">
        <title>X-ray structure analysis of a membrane protein complex. Electron density map at 3-A resolution and a model of the chromophores of the photosynthetic reaction center from Rhodopseudomonas viridis.</title>
        <authorList>
            <person name="Deisenhofer J."/>
            <person name="Epp O."/>
            <person name="Miki K."/>
            <person name="Huber R."/>
            <person name="Michel H."/>
        </authorList>
    </citation>
    <scope>X-RAY CRYSTALLOGRAPHY (3 ANGSTROMS)</scope>
</reference>
<reference key="4">
    <citation type="journal article" date="1997" name="Structure">
        <title>The coupling of light-induced electron transfer and proton uptake as derived from crystal structures of reaction centres from Rhodopseudomonas viridis modified at the binding site of the secondary quinone, QB.</title>
        <authorList>
            <person name="Lancaster C.R.D."/>
            <person name="Michel H."/>
        </authorList>
    </citation>
    <scope>X-RAY CRYSTALLOGRAPHY (2.45 ANGSTROMS)</scope>
    <source>
        <strain>ATCC 19567 / DSM 133 / F</strain>
    </source>
</reference>
<reference key="5">
    <citation type="journal article" date="1999" name="J. Mol. Biol.">
        <title>Refined crystal structures of reaction centres from Rhodopseudomonas viridis in complexes with the herbicide atrazine and two chiral atrazine derivatives also lead to a new model of the bound carotenoid.</title>
        <authorList>
            <person name="Lancaster C.R.D."/>
            <person name="Michel H."/>
        </authorList>
    </citation>
    <scope>X-RAY CRYSTALLOGRAPHY (2.35 ANGSTROMS)</scope>
    <source>
        <strain>ATCC 19567 / DSM 133 / F</strain>
    </source>
</reference>
<reference key="6">
    <citation type="journal article" date="1989" name="EMBO J.">
        <title>Nobel lecture. The photosynthetic reaction centre from the purple bacterium Rhodopseudomonas viridis.</title>
        <authorList>
            <person name="Deisenhofer J."/>
            <person name="Michel H."/>
        </authorList>
    </citation>
    <scope>TOPOLOGY</scope>
</reference>
<accession>P06010</accession>
<gene>
    <name type="primary">pufM</name>
</gene>